<dbReference type="EMBL" id="J02974">
    <property type="protein sequence ID" value="AAA27707.1"/>
    <property type="molecule type" value="Genomic_DNA"/>
</dbReference>
<dbReference type="PIR" id="A33891">
    <property type="entry name" value="MWAXIC"/>
</dbReference>
<dbReference type="SMR" id="P10569"/>
<dbReference type="IntAct" id="P10569">
    <property type="interactions" value="1"/>
</dbReference>
<dbReference type="MINT" id="P10569"/>
<dbReference type="BindingDB" id="P10569"/>
<dbReference type="ChEMBL" id="CHEMBL4295712"/>
<dbReference type="iPTMnet" id="P10569"/>
<dbReference type="VEuPathDB" id="AmoebaDB:ACA1_173680"/>
<dbReference type="GO" id="GO:0031252">
    <property type="term" value="C:cell leading edge"/>
    <property type="evidence" value="ECO:0007669"/>
    <property type="project" value="UniProtKB-ARBA"/>
</dbReference>
<dbReference type="GO" id="GO:0005737">
    <property type="term" value="C:cytoplasm"/>
    <property type="evidence" value="ECO:0007669"/>
    <property type="project" value="TreeGrafter"/>
</dbReference>
<dbReference type="GO" id="GO:0016459">
    <property type="term" value="C:myosin complex"/>
    <property type="evidence" value="ECO:0007669"/>
    <property type="project" value="UniProtKB-KW"/>
</dbReference>
<dbReference type="GO" id="GO:0005886">
    <property type="term" value="C:plasma membrane"/>
    <property type="evidence" value="ECO:0007669"/>
    <property type="project" value="TreeGrafter"/>
</dbReference>
<dbReference type="GO" id="GO:0120025">
    <property type="term" value="C:plasma membrane bounded cell projection"/>
    <property type="evidence" value="ECO:0007669"/>
    <property type="project" value="UniProtKB-ARBA"/>
</dbReference>
<dbReference type="GO" id="GO:0051015">
    <property type="term" value="F:actin filament binding"/>
    <property type="evidence" value="ECO:0007669"/>
    <property type="project" value="TreeGrafter"/>
</dbReference>
<dbReference type="GO" id="GO:0005524">
    <property type="term" value="F:ATP binding"/>
    <property type="evidence" value="ECO:0007669"/>
    <property type="project" value="UniProtKB-KW"/>
</dbReference>
<dbReference type="GO" id="GO:0000146">
    <property type="term" value="F:microfilament motor activity"/>
    <property type="evidence" value="ECO:0007669"/>
    <property type="project" value="TreeGrafter"/>
</dbReference>
<dbReference type="GO" id="GO:0007015">
    <property type="term" value="P:actin filament organization"/>
    <property type="evidence" value="ECO:0007669"/>
    <property type="project" value="TreeGrafter"/>
</dbReference>
<dbReference type="GO" id="GO:0022607">
    <property type="term" value="P:cellular component assembly"/>
    <property type="evidence" value="ECO:0007669"/>
    <property type="project" value="UniProtKB-ARBA"/>
</dbReference>
<dbReference type="GO" id="GO:0043327">
    <property type="term" value="P:chemotaxis to cAMP"/>
    <property type="evidence" value="ECO:0007669"/>
    <property type="project" value="TreeGrafter"/>
</dbReference>
<dbReference type="GO" id="GO:0006897">
    <property type="term" value="P:endocytosis"/>
    <property type="evidence" value="ECO:0007669"/>
    <property type="project" value="UniProtKB-ARBA"/>
</dbReference>
<dbReference type="CDD" id="cd01378">
    <property type="entry name" value="MYSc_Myo1"/>
    <property type="match status" value="1"/>
</dbReference>
<dbReference type="FunFam" id="1.10.10.820:FF:000001">
    <property type="entry name" value="Myosin heavy chain"/>
    <property type="match status" value="1"/>
</dbReference>
<dbReference type="FunFam" id="1.20.58.530:FF:000007">
    <property type="entry name" value="Myosin IE"/>
    <property type="match status" value="1"/>
</dbReference>
<dbReference type="FunFam" id="3.40.850.10:FF:000101">
    <property type="entry name" value="Slow myosin heavy chain 2"/>
    <property type="match status" value="1"/>
</dbReference>
<dbReference type="FunFam" id="2.30.30.40:FF:000072">
    <property type="entry name" value="Unconventional Myosin IB"/>
    <property type="match status" value="1"/>
</dbReference>
<dbReference type="Gene3D" id="1.10.10.820">
    <property type="match status" value="1"/>
</dbReference>
<dbReference type="Gene3D" id="1.20.5.4820">
    <property type="match status" value="1"/>
</dbReference>
<dbReference type="Gene3D" id="1.20.58.530">
    <property type="match status" value="1"/>
</dbReference>
<dbReference type="Gene3D" id="3.40.850.10">
    <property type="entry name" value="Kinesin motor domain"/>
    <property type="match status" value="1"/>
</dbReference>
<dbReference type="Gene3D" id="1.20.120.720">
    <property type="entry name" value="Myosin VI head, motor domain, U50 subdomain"/>
    <property type="match status" value="1"/>
</dbReference>
<dbReference type="Gene3D" id="2.30.30.40">
    <property type="entry name" value="SH3 Domains"/>
    <property type="match status" value="1"/>
</dbReference>
<dbReference type="InterPro" id="IPR036961">
    <property type="entry name" value="Kinesin_motor_dom_sf"/>
</dbReference>
<dbReference type="InterPro" id="IPR001609">
    <property type="entry name" value="Myosin_head_motor_dom-like"/>
</dbReference>
<dbReference type="InterPro" id="IPR010926">
    <property type="entry name" value="Myosin_TH1"/>
</dbReference>
<dbReference type="InterPro" id="IPR036072">
    <property type="entry name" value="MYSc_Myo1"/>
</dbReference>
<dbReference type="InterPro" id="IPR027417">
    <property type="entry name" value="P-loop_NTPase"/>
</dbReference>
<dbReference type="InterPro" id="IPR036028">
    <property type="entry name" value="SH3-like_dom_sf"/>
</dbReference>
<dbReference type="InterPro" id="IPR001452">
    <property type="entry name" value="SH3_domain"/>
</dbReference>
<dbReference type="PANTHER" id="PTHR13140">
    <property type="entry name" value="MYOSIN"/>
    <property type="match status" value="1"/>
</dbReference>
<dbReference type="PANTHER" id="PTHR13140:SF513">
    <property type="entry name" value="MYOSIN ID HEAVY CHAIN"/>
    <property type="match status" value="1"/>
</dbReference>
<dbReference type="Pfam" id="PF00063">
    <property type="entry name" value="Myosin_head"/>
    <property type="match status" value="1"/>
</dbReference>
<dbReference type="Pfam" id="PF06017">
    <property type="entry name" value="Myosin_TH1"/>
    <property type="match status" value="1"/>
</dbReference>
<dbReference type="Pfam" id="PF14604">
    <property type="entry name" value="SH3_9"/>
    <property type="match status" value="1"/>
</dbReference>
<dbReference type="PRINTS" id="PR00193">
    <property type="entry name" value="MYOSINHEAVY"/>
</dbReference>
<dbReference type="PRINTS" id="PR00452">
    <property type="entry name" value="SH3DOMAIN"/>
</dbReference>
<dbReference type="SMART" id="SM00242">
    <property type="entry name" value="MYSc"/>
    <property type="match status" value="1"/>
</dbReference>
<dbReference type="SMART" id="SM00326">
    <property type="entry name" value="SH3"/>
    <property type="match status" value="1"/>
</dbReference>
<dbReference type="SUPFAM" id="SSF52540">
    <property type="entry name" value="P-loop containing nucleoside triphosphate hydrolases"/>
    <property type="match status" value="1"/>
</dbReference>
<dbReference type="SUPFAM" id="SSF50044">
    <property type="entry name" value="SH3-domain"/>
    <property type="match status" value="1"/>
</dbReference>
<dbReference type="PROSITE" id="PS51456">
    <property type="entry name" value="MYOSIN_MOTOR"/>
    <property type="match status" value="1"/>
</dbReference>
<dbReference type="PROSITE" id="PS50002">
    <property type="entry name" value="SH3"/>
    <property type="match status" value="1"/>
</dbReference>
<dbReference type="PROSITE" id="PS51757">
    <property type="entry name" value="TH1"/>
    <property type="match status" value="1"/>
</dbReference>
<sequence length="1168" mass="127310">MAYTSKHGVDDMVMLTSISNDAINDNLKKRFAADLIYTYIGHVLISVNPYKQINNLYTERTLKDYRGKYRYELPPHVYALADDMYRTMLSESEDQCVIISGESGAGKTEASKKIMQYIAAVSGATGDVMRVKDVILEAFGNAKTIRNNNSSRFGKYMEIQFDLKGDPVGGRISNYLLEKSRVVYQTNGERNFHIFYQLLAARARRPEAKFGLQTPDYYFYLNQGKTYTVDGMDDNQEFQDTWNAMKVIGFTAEEQHEIFRLVTAILYLGNVQFVDDGKGGSTIADSRPVAVETALLYRTITTGEQGRGRSSVYSCPQDPLGAIYSRDALSKALYSRMFDYIIQRVNDAMYIDDPEALTTGILDIYGFEIFGKNGFEQLCINFVNEKLQQIFIQLTLKAEQEEYGAEGIQWENIDYFNNKICCDLIEEKRPPGLMTILDDVCNFPKGTDDKFREKLLGAFPTHAHLAATSQPDEFVIKHYAGDVVYNVDGFCDKNKDLLFKDLIGLAECTSSTFFAGLFPEAKEVATSKKKPTTAGFKIKESINILVATLSKCTPHYIRCIKPNEKKAANAFNNSLVLHQVKYLGLLENVRIRRAGYAYRQSYDKFFYRYRVVCPKTWSGWNGDMVSGAEAILNHVGMSLGKEYQKGKTKIFIRQPESVFSLEELRDRTVFSYANKIQRFLRKTAMRKYYYEVKKGGNDALVNKKERRRLSLERPFKTDYINYRQNFKLKDCIGDKGTEKVLFADLCNNLDKSFWGSKVERRIMVLTSNAMFLVAIDPNKDKIEKKVKPFLYVLKRRIDFNKIGSITLSPLQDNFMLISVNGEHSNLLECRRKTELIGVLLKHNPSVRIQFADTFNVTLKGGKTCVVKFIRDPQGGDGKVKGTKVSVAPGLPPSSAPNIQAPQETSGGASFTVAEQSYKDQILGAKGGGGGGGRGRGGPSPSGAVSPRPSPGGGGGGPSPFGGRPSPSGPPAAASAPGPEQARALYDFAAENPDELTFNEGAVVTVINKSNPDWWEGELNGQRGVFPASYVELIPRAAAPAPGPSGGPRPAPPGGKSGRAAPMGGPGPMRGRGGPAPGGPGRGGAPPPGAGRAGPPGGRGMPAPGGAAPRGRGAPPPGAGGPPGGGRGGAPPPGGMRGRGGPGPAPPGGMARGGMMPPRGRAGPPPPGM</sequence>
<name>MYSC_ACACA</name>
<evidence type="ECO:0000255" key="1"/>
<evidence type="ECO:0000255" key="2">
    <source>
        <dbReference type="PROSITE-ProRule" id="PRU00192"/>
    </source>
</evidence>
<evidence type="ECO:0000255" key="3">
    <source>
        <dbReference type="PROSITE-ProRule" id="PRU00782"/>
    </source>
</evidence>
<evidence type="ECO:0000255" key="4">
    <source>
        <dbReference type="PROSITE-ProRule" id="PRU01093"/>
    </source>
</evidence>
<evidence type="ECO:0000256" key="5">
    <source>
        <dbReference type="SAM" id="MobiDB-lite"/>
    </source>
</evidence>
<evidence type="ECO:0000269" key="6">
    <source>
    </source>
</evidence>
<evidence type="ECO:0000305" key="7"/>
<accession>P10569</accession>
<gene>
    <name type="primary">MIC</name>
</gene>
<protein>
    <recommendedName>
        <fullName>Myosin IC heavy chain</fullName>
    </recommendedName>
</protein>
<keyword id="KW-0009">Actin-binding</keyword>
<keyword id="KW-0067">ATP-binding</keyword>
<keyword id="KW-0505">Motor protein</keyword>
<keyword id="KW-0518">Myosin</keyword>
<keyword id="KW-0547">Nucleotide-binding</keyword>
<keyword id="KW-0597">Phosphoprotein</keyword>
<keyword id="KW-0728">SH3 domain</keyword>
<comment type="function">
    <text>Myosin is a protein that binds to F-actin and has ATPase activity that is activated by F-actin.</text>
</comment>
<comment type="subunit">
    <text>Myosin I heavy chain is single-headed. Dimer of a heavy and a light chain. Inability to self-assemble into filaments.</text>
</comment>
<comment type="domain">
    <text>Myosin tail domain binds directly to anionic phospholipid membranes; myosins I could therefore move actin relative to membranes and vice versa. TH.2 and SH3 bind tightly to F-actin; this together with the nucleotide-sensitive site in the head, allows single molecules of myosin I to cross-link actin filaments.</text>
</comment>
<comment type="miscellaneous">
    <text>This organism expresses at least three isoforms of myosin I heavy-chain, encoded by genes MIA, MIB, and MIC.</text>
</comment>
<comment type="similarity">
    <text evidence="7">Belongs to the TRAFAC class myosin-kinesin ATPase superfamily. Myosin family.</text>
</comment>
<comment type="caution">
    <text evidence="7">Was originally thought to be myosin IB.</text>
</comment>
<organism>
    <name type="scientific">Acanthamoeba castellanii</name>
    <name type="common">Amoeba</name>
    <dbReference type="NCBI Taxonomy" id="5755"/>
    <lineage>
        <taxon>Eukaryota</taxon>
        <taxon>Amoebozoa</taxon>
        <taxon>Discosea</taxon>
        <taxon>Longamoebia</taxon>
        <taxon>Centramoebida</taxon>
        <taxon>Acanthamoebidae</taxon>
        <taxon>Acanthamoeba</taxon>
    </lineage>
</organism>
<proteinExistence type="evidence at protein level"/>
<feature type="chain" id="PRO_0000123362" description="Myosin IC heavy chain">
    <location>
        <begin position="1"/>
        <end position="1168"/>
    </location>
</feature>
<feature type="domain" description="Myosin motor" evidence="3">
    <location>
        <begin position="7"/>
        <end position="666"/>
    </location>
</feature>
<feature type="domain" description="TH1" evidence="4">
    <location>
        <begin position="704"/>
        <end position="892"/>
    </location>
</feature>
<feature type="domain" description="SH3" evidence="2">
    <location>
        <begin position="976"/>
        <end position="1035"/>
    </location>
</feature>
<feature type="region of interest" description="Actin-binding" evidence="3">
    <location>
        <begin position="542"/>
        <end position="564"/>
    </location>
</feature>
<feature type="region of interest" description="Disordered" evidence="5">
    <location>
        <begin position="876"/>
        <end position="909"/>
    </location>
</feature>
<feature type="region of interest" description="Disordered" evidence="5">
    <location>
        <begin position="921"/>
        <end position="978"/>
    </location>
</feature>
<feature type="region of interest" description="Disordered" evidence="5">
    <location>
        <begin position="1036"/>
        <end position="1168"/>
    </location>
</feature>
<feature type="compositionally biased region" description="Polar residues" evidence="5">
    <location>
        <begin position="895"/>
        <end position="909"/>
    </location>
</feature>
<feature type="compositionally biased region" description="Gly residues" evidence="5">
    <location>
        <begin position="924"/>
        <end position="939"/>
    </location>
</feature>
<feature type="compositionally biased region" description="Gly residues" evidence="5">
    <location>
        <begin position="950"/>
        <end position="959"/>
    </location>
</feature>
<feature type="compositionally biased region" description="Low complexity" evidence="5">
    <location>
        <begin position="960"/>
        <end position="978"/>
    </location>
</feature>
<feature type="compositionally biased region" description="Pro residues" evidence="5">
    <location>
        <begin position="1040"/>
        <end position="1052"/>
    </location>
</feature>
<feature type="compositionally biased region" description="Gly residues" evidence="5">
    <location>
        <begin position="1063"/>
        <end position="1083"/>
    </location>
</feature>
<feature type="compositionally biased region" description="Gly residues" evidence="5">
    <location>
        <begin position="1090"/>
        <end position="1099"/>
    </location>
</feature>
<feature type="compositionally biased region" description="Low complexity" evidence="5">
    <location>
        <begin position="1100"/>
        <end position="1112"/>
    </location>
</feature>
<feature type="compositionally biased region" description="Gly residues" evidence="5">
    <location>
        <begin position="1120"/>
        <end position="1141"/>
    </location>
</feature>
<feature type="compositionally biased region" description="Low complexity" evidence="5">
    <location>
        <begin position="1152"/>
        <end position="1161"/>
    </location>
</feature>
<feature type="binding site" evidence="1">
    <location>
        <begin position="101"/>
        <end position="108"/>
    </location>
    <ligand>
        <name>ATP</name>
        <dbReference type="ChEBI" id="CHEBI:30616"/>
    </ligand>
</feature>
<feature type="modified residue" description="Phosphoserine" evidence="6">
    <location>
        <position position="311"/>
    </location>
</feature>
<reference key="1">
    <citation type="journal article" date="1987" name="Proc. Natl. Acad. Sci. U.S.A.">
        <title>The heavy chain of Acanthamoeba myosin IB is a fusion of myosin-like and non-myosin-like sequences.</title>
        <authorList>
            <person name="Jung G."/>
            <person name="Korn E.D."/>
            <person name="Hammer J.A. III"/>
        </authorList>
    </citation>
    <scope>NUCLEOTIDE SEQUENCE [GENOMIC DNA]</scope>
</reference>
<reference key="2">
    <citation type="journal article" date="1986" name="Proc. Natl. Acad. Sci. U.S.A.">
        <title>Genetic evidence that Acanthamoeba myosin I is a true myosin.</title>
        <authorList>
            <person name="Hammer J.A. III"/>
            <person name="Jung G."/>
            <person name="Korn E.D."/>
        </authorList>
    </citation>
    <scope>PARTIAL NUCLEOTIDE SEQUENCE</scope>
</reference>
<reference key="3">
    <citation type="journal article" date="1989" name="J. Biol. Chem.">
        <title>The localization and sequence of the phosphorylation sites of Acanthamoeba myosins I. An improved method for locating the phosphorylated amino acid.</title>
        <authorList>
            <person name="Brzeska H."/>
            <person name="Lynch T.J."/>
            <person name="Martin B."/>
            <person name="Korn E.D."/>
        </authorList>
    </citation>
    <scope>PHOSPHORYLATION AT SER-311</scope>
</reference>